<comment type="function">
    <text evidence="2">Involved in base excision repair of DNA damaged by oxidation or by mutagenic agents. Acts as a DNA glycosylase that recognizes and removes damaged bases. Has a preference for oxidized purines, such as 7,8-dihydro-8-oxoguanine (8-oxoG). Has AP (apurinic/apyrimidinic) lyase activity and introduces nicks in the DNA strand. Cleaves the DNA backbone by beta-delta elimination to generate a single-strand break at the site of the removed base with both 3'- and 5'-phosphates.</text>
</comment>
<comment type="catalytic activity">
    <reaction evidence="2">
        <text>Hydrolysis of DNA containing ring-opened 7-methylguanine residues, releasing 2,6-diamino-4-hydroxy-5-(N-methyl)formamidopyrimidine.</text>
        <dbReference type="EC" id="3.2.2.23"/>
    </reaction>
</comment>
<comment type="catalytic activity">
    <reaction evidence="2">
        <text>2'-deoxyribonucleotide-(2'-deoxyribose 5'-phosphate)-2'-deoxyribonucleotide-DNA = a 3'-end 2'-deoxyribonucleotide-(2,3-dehydro-2,3-deoxyribose 5'-phosphate)-DNA + a 5'-end 5'-phospho-2'-deoxyribonucleoside-DNA + H(+)</text>
        <dbReference type="Rhea" id="RHEA:66592"/>
        <dbReference type="Rhea" id="RHEA-COMP:13180"/>
        <dbReference type="Rhea" id="RHEA-COMP:16897"/>
        <dbReference type="Rhea" id="RHEA-COMP:17067"/>
        <dbReference type="ChEBI" id="CHEBI:15378"/>
        <dbReference type="ChEBI" id="CHEBI:136412"/>
        <dbReference type="ChEBI" id="CHEBI:157695"/>
        <dbReference type="ChEBI" id="CHEBI:167181"/>
        <dbReference type="EC" id="4.2.99.18"/>
    </reaction>
</comment>
<comment type="cofactor">
    <cofactor evidence="2">
        <name>Zn(2+)</name>
        <dbReference type="ChEBI" id="CHEBI:29105"/>
    </cofactor>
    <text evidence="2">Binds 1 zinc ion per subunit.</text>
</comment>
<comment type="subunit">
    <text evidence="2">Monomer.</text>
</comment>
<comment type="similarity">
    <text evidence="2">Belongs to the FPG family.</text>
</comment>
<accession>B1YN48</accession>
<reference key="1">
    <citation type="submission" date="2008-04" db="EMBL/GenBank/DDBJ databases">
        <title>Complete sequence of chromosome 1 of Burkholderia ambifaria MC40-6.</title>
        <authorList>
            <person name="Copeland A."/>
            <person name="Lucas S."/>
            <person name="Lapidus A."/>
            <person name="Glavina del Rio T."/>
            <person name="Dalin E."/>
            <person name="Tice H."/>
            <person name="Pitluck S."/>
            <person name="Chain P."/>
            <person name="Malfatti S."/>
            <person name="Shin M."/>
            <person name="Vergez L."/>
            <person name="Lang D."/>
            <person name="Schmutz J."/>
            <person name="Larimer F."/>
            <person name="Land M."/>
            <person name="Hauser L."/>
            <person name="Kyrpides N."/>
            <person name="Lykidis A."/>
            <person name="Ramette A."/>
            <person name="Konstantinidis K."/>
            <person name="Tiedje J."/>
            <person name="Richardson P."/>
        </authorList>
    </citation>
    <scope>NUCLEOTIDE SEQUENCE [LARGE SCALE GENOMIC DNA]</scope>
    <source>
        <strain>MC40-6</strain>
    </source>
</reference>
<dbReference type="EC" id="3.2.2.23" evidence="2"/>
<dbReference type="EC" id="4.2.99.18" evidence="2"/>
<dbReference type="EMBL" id="CP001025">
    <property type="protein sequence ID" value="ACB65193.1"/>
    <property type="molecule type" value="Genomic_DNA"/>
</dbReference>
<dbReference type="RefSeq" id="WP_006759023.1">
    <property type="nucleotide sequence ID" value="NC_010551.1"/>
</dbReference>
<dbReference type="SMR" id="B1YN48"/>
<dbReference type="KEGG" id="bac:BamMC406_2716"/>
<dbReference type="HOGENOM" id="CLU_038423_1_1_4"/>
<dbReference type="OrthoDB" id="9800855at2"/>
<dbReference type="Proteomes" id="UP000001680">
    <property type="component" value="Chromosome 1"/>
</dbReference>
<dbReference type="GO" id="GO:0034039">
    <property type="term" value="F:8-oxo-7,8-dihydroguanine DNA N-glycosylase activity"/>
    <property type="evidence" value="ECO:0007669"/>
    <property type="project" value="TreeGrafter"/>
</dbReference>
<dbReference type="GO" id="GO:0140078">
    <property type="term" value="F:class I DNA-(apurinic or apyrimidinic site) endonuclease activity"/>
    <property type="evidence" value="ECO:0007669"/>
    <property type="project" value="UniProtKB-EC"/>
</dbReference>
<dbReference type="GO" id="GO:0003684">
    <property type="term" value="F:damaged DNA binding"/>
    <property type="evidence" value="ECO:0007669"/>
    <property type="project" value="InterPro"/>
</dbReference>
<dbReference type="GO" id="GO:0008270">
    <property type="term" value="F:zinc ion binding"/>
    <property type="evidence" value="ECO:0007669"/>
    <property type="project" value="UniProtKB-UniRule"/>
</dbReference>
<dbReference type="GO" id="GO:0006284">
    <property type="term" value="P:base-excision repair"/>
    <property type="evidence" value="ECO:0007669"/>
    <property type="project" value="InterPro"/>
</dbReference>
<dbReference type="CDD" id="cd08966">
    <property type="entry name" value="EcFpg-like_N"/>
    <property type="match status" value="1"/>
</dbReference>
<dbReference type="FunFam" id="1.10.8.50:FF:000003">
    <property type="entry name" value="Formamidopyrimidine-DNA glycosylase"/>
    <property type="match status" value="1"/>
</dbReference>
<dbReference type="Gene3D" id="1.10.8.50">
    <property type="match status" value="1"/>
</dbReference>
<dbReference type="Gene3D" id="3.20.190.10">
    <property type="entry name" value="MutM-like, N-terminal"/>
    <property type="match status" value="1"/>
</dbReference>
<dbReference type="HAMAP" id="MF_00103">
    <property type="entry name" value="Fapy_DNA_glycosyl"/>
    <property type="match status" value="1"/>
</dbReference>
<dbReference type="InterPro" id="IPR015886">
    <property type="entry name" value="DNA_glyclase/AP_lyase_DNA-bd"/>
</dbReference>
<dbReference type="InterPro" id="IPR015887">
    <property type="entry name" value="DNA_glyclase_Znf_dom_DNA_BS"/>
</dbReference>
<dbReference type="InterPro" id="IPR020629">
    <property type="entry name" value="Formamido-pyr_DNA_Glyclase"/>
</dbReference>
<dbReference type="InterPro" id="IPR012319">
    <property type="entry name" value="FPG_cat"/>
</dbReference>
<dbReference type="InterPro" id="IPR035937">
    <property type="entry name" value="MutM-like_N-ter"/>
</dbReference>
<dbReference type="InterPro" id="IPR010979">
    <property type="entry name" value="Ribosomal_uS13-like_H2TH"/>
</dbReference>
<dbReference type="InterPro" id="IPR000214">
    <property type="entry name" value="Znf_DNA_glyclase/AP_lyase"/>
</dbReference>
<dbReference type="InterPro" id="IPR010663">
    <property type="entry name" value="Znf_FPG/IleRS"/>
</dbReference>
<dbReference type="NCBIfam" id="TIGR00577">
    <property type="entry name" value="fpg"/>
    <property type="match status" value="1"/>
</dbReference>
<dbReference type="NCBIfam" id="NF002211">
    <property type="entry name" value="PRK01103.1"/>
    <property type="match status" value="1"/>
</dbReference>
<dbReference type="PANTHER" id="PTHR22993">
    <property type="entry name" value="FORMAMIDOPYRIMIDINE-DNA GLYCOSYLASE"/>
    <property type="match status" value="1"/>
</dbReference>
<dbReference type="PANTHER" id="PTHR22993:SF9">
    <property type="entry name" value="FORMAMIDOPYRIMIDINE-DNA GLYCOSYLASE"/>
    <property type="match status" value="1"/>
</dbReference>
<dbReference type="Pfam" id="PF01149">
    <property type="entry name" value="Fapy_DNA_glyco"/>
    <property type="match status" value="1"/>
</dbReference>
<dbReference type="Pfam" id="PF06831">
    <property type="entry name" value="H2TH"/>
    <property type="match status" value="1"/>
</dbReference>
<dbReference type="Pfam" id="PF06827">
    <property type="entry name" value="zf-FPG_IleRS"/>
    <property type="match status" value="1"/>
</dbReference>
<dbReference type="SMART" id="SM00898">
    <property type="entry name" value="Fapy_DNA_glyco"/>
    <property type="match status" value="1"/>
</dbReference>
<dbReference type="SMART" id="SM01232">
    <property type="entry name" value="H2TH"/>
    <property type="match status" value="1"/>
</dbReference>
<dbReference type="SUPFAM" id="SSF57716">
    <property type="entry name" value="Glucocorticoid receptor-like (DNA-binding domain)"/>
    <property type="match status" value="1"/>
</dbReference>
<dbReference type="SUPFAM" id="SSF81624">
    <property type="entry name" value="N-terminal domain of MutM-like DNA repair proteins"/>
    <property type="match status" value="1"/>
</dbReference>
<dbReference type="SUPFAM" id="SSF46946">
    <property type="entry name" value="S13-like H2TH domain"/>
    <property type="match status" value="1"/>
</dbReference>
<dbReference type="PROSITE" id="PS51068">
    <property type="entry name" value="FPG_CAT"/>
    <property type="match status" value="1"/>
</dbReference>
<dbReference type="PROSITE" id="PS01242">
    <property type="entry name" value="ZF_FPG_1"/>
    <property type="match status" value="1"/>
</dbReference>
<dbReference type="PROSITE" id="PS51066">
    <property type="entry name" value="ZF_FPG_2"/>
    <property type="match status" value="1"/>
</dbReference>
<protein>
    <recommendedName>
        <fullName evidence="2">Formamidopyrimidine-DNA glycosylase</fullName>
        <shortName evidence="2">Fapy-DNA glycosylase</shortName>
        <ecNumber evidence="2">3.2.2.23</ecNumber>
    </recommendedName>
    <alternativeName>
        <fullName evidence="2">DNA-(apurinic or apyrimidinic site) lyase MutM</fullName>
        <shortName evidence="2">AP lyase MutM</shortName>
        <ecNumber evidence="2">4.2.99.18</ecNumber>
    </alternativeName>
</protein>
<feature type="initiator methionine" description="Removed" evidence="1">
    <location>
        <position position="1"/>
    </location>
</feature>
<feature type="chain" id="PRO_1000094033" description="Formamidopyrimidine-DNA glycosylase">
    <location>
        <begin position="2"/>
        <end position="275"/>
    </location>
</feature>
<feature type="zinc finger region" description="FPG-type" evidence="2">
    <location>
        <begin position="241"/>
        <end position="275"/>
    </location>
</feature>
<feature type="active site" description="Schiff-base intermediate with DNA" evidence="2">
    <location>
        <position position="2"/>
    </location>
</feature>
<feature type="active site" description="Proton donor" evidence="2">
    <location>
        <position position="3"/>
    </location>
</feature>
<feature type="active site" description="Proton donor; for beta-elimination activity" evidence="2">
    <location>
        <position position="58"/>
    </location>
</feature>
<feature type="active site" description="Proton donor; for delta-elimination activity" evidence="2">
    <location>
        <position position="265"/>
    </location>
</feature>
<feature type="binding site" evidence="2">
    <location>
        <position position="93"/>
    </location>
    <ligand>
        <name>DNA</name>
        <dbReference type="ChEBI" id="CHEBI:16991"/>
    </ligand>
</feature>
<feature type="binding site" evidence="2">
    <location>
        <position position="111"/>
    </location>
    <ligand>
        <name>DNA</name>
        <dbReference type="ChEBI" id="CHEBI:16991"/>
    </ligand>
</feature>
<feature type="binding site" evidence="2">
    <location>
        <position position="156"/>
    </location>
    <ligand>
        <name>DNA</name>
        <dbReference type="ChEBI" id="CHEBI:16991"/>
    </ligand>
</feature>
<name>FPG_BURA4</name>
<evidence type="ECO:0000250" key="1"/>
<evidence type="ECO:0000255" key="2">
    <source>
        <dbReference type="HAMAP-Rule" id="MF_00103"/>
    </source>
</evidence>
<keyword id="KW-0227">DNA damage</keyword>
<keyword id="KW-0234">DNA repair</keyword>
<keyword id="KW-0238">DNA-binding</keyword>
<keyword id="KW-0326">Glycosidase</keyword>
<keyword id="KW-0378">Hydrolase</keyword>
<keyword id="KW-0456">Lyase</keyword>
<keyword id="KW-0479">Metal-binding</keyword>
<keyword id="KW-0511">Multifunctional enzyme</keyword>
<keyword id="KW-0862">Zinc</keyword>
<keyword id="KW-0863">Zinc-finger</keyword>
<gene>
    <name evidence="2" type="primary">mutM</name>
    <name evidence="2" type="synonym">fpg</name>
    <name type="ordered locus">BamMC406_2716</name>
</gene>
<organism>
    <name type="scientific">Burkholderia ambifaria (strain MC40-6)</name>
    <dbReference type="NCBI Taxonomy" id="398577"/>
    <lineage>
        <taxon>Bacteria</taxon>
        <taxon>Pseudomonadati</taxon>
        <taxon>Pseudomonadota</taxon>
        <taxon>Betaproteobacteria</taxon>
        <taxon>Burkholderiales</taxon>
        <taxon>Burkholderiaceae</taxon>
        <taxon>Burkholderia</taxon>
        <taxon>Burkholderia cepacia complex</taxon>
    </lineage>
</organism>
<proteinExistence type="inferred from homology"/>
<sequence>MPELPEVEVTRRGIEPFVAGRRVERVDVRTAMLRWPVPAGLAEQLRAREVLAVERRGKYLLFEVDAGWFIVHLGMTGTLRVLPAAGVPVAAKHDHIDWIFDEFVLRFRDPRRFGAVLWHAREAGDVHAHPLLASLGVEPFSPAFTGALLHARTRGRTVSVKQALLAGDMVVGVGNIYASESLFRAGIRPTTAAGKVSLPRYERLADAVRATLADAIERGGSTLRDFVGSNGESGYFQLDCFVYDRAGLPCRVCGTPIRQIVQGQRSTYFCPTCQR</sequence>